<feature type="chain" id="PRO_0000133818" description="DNA-directed RNA polymerase subunit Rpo6">
    <location>
        <begin position="1"/>
        <end position="106"/>
    </location>
</feature>
<name>RPO6_PYRAE</name>
<reference key="1">
    <citation type="journal article" date="2002" name="Proc. Natl. Acad. Sci. U.S.A.">
        <title>Genome sequence of the hyperthermophilic crenarchaeon Pyrobaculum aerophilum.</title>
        <authorList>
            <person name="Fitz-Gibbon S.T."/>
            <person name="Ladner H."/>
            <person name="Kim U.-J."/>
            <person name="Stetter K.O."/>
            <person name="Simon M.I."/>
            <person name="Miller J.H."/>
        </authorList>
    </citation>
    <scope>NUCLEOTIDE SEQUENCE [LARGE SCALE GENOMIC DNA]</scope>
    <source>
        <strain>ATCC 51768 / DSM 7523 / JCM 9630 / CIP 104966 / NBRC 100827 / IM2</strain>
    </source>
</reference>
<gene>
    <name evidence="1" type="primary">rpo6</name>
    <name evidence="1" type="synonym">rpoK</name>
    <name type="ordered locus">PAE3271</name>
</gene>
<keyword id="KW-0963">Cytoplasm</keyword>
<keyword id="KW-0240">DNA-directed RNA polymerase</keyword>
<keyword id="KW-0548">Nucleotidyltransferase</keyword>
<keyword id="KW-1185">Reference proteome</keyword>
<keyword id="KW-0804">Transcription</keyword>
<keyword id="KW-0808">Transferase</keyword>
<proteinExistence type="inferred from homology"/>
<organism>
    <name type="scientific">Pyrobaculum aerophilum (strain ATCC 51768 / DSM 7523 / JCM 9630 / CIP 104966 / NBRC 100827 / IM2)</name>
    <dbReference type="NCBI Taxonomy" id="178306"/>
    <lineage>
        <taxon>Archaea</taxon>
        <taxon>Thermoproteota</taxon>
        <taxon>Thermoprotei</taxon>
        <taxon>Thermoproteales</taxon>
        <taxon>Thermoproteaceae</taxon>
        <taxon>Pyrobaculum</taxon>
    </lineage>
</organism>
<dbReference type="EC" id="2.7.7.6" evidence="1"/>
<dbReference type="EMBL" id="AE009441">
    <property type="protein sequence ID" value="AAL64802.1"/>
    <property type="molecule type" value="Genomic_DNA"/>
</dbReference>
<dbReference type="RefSeq" id="WP_011009270.1">
    <property type="nucleotide sequence ID" value="NC_003364.1"/>
</dbReference>
<dbReference type="SMR" id="Q8ZTF9"/>
<dbReference type="FunCoup" id="Q8ZTF9">
    <property type="interactions" value="8"/>
</dbReference>
<dbReference type="STRING" id="178306.PAE3271"/>
<dbReference type="EnsemblBacteria" id="AAL64802">
    <property type="protein sequence ID" value="AAL64802"/>
    <property type="gene ID" value="PAE3271"/>
</dbReference>
<dbReference type="GeneID" id="1463989"/>
<dbReference type="KEGG" id="pai:PAE3271"/>
<dbReference type="PATRIC" id="fig|178306.9.peg.2464"/>
<dbReference type="eggNOG" id="arCOG01268">
    <property type="taxonomic scope" value="Archaea"/>
</dbReference>
<dbReference type="HOGENOM" id="CLU_112527_2_2_2"/>
<dbReference type="InParanoid" id="Q8ZTF9"/>
<dbReference type="Proteomes" id="UP000002439">
    <property type="component" value="Chromosome"/>
</dbReference>
<dbReference type="GO" id="GO:0005737">
    <property type="term" value="C:cytoplasm"/>
    <property type="evidence" value="ECO:0007669"/>
    <property type="project" value="UniProtKB-SubCell"/>
</dbReference>
<dbReference type="GO" id="GO:0000428">
    <property type="term" value="C:DNA-directed RNA polymerase complex"/>
    <property type="evidence" value="ECO:0007669"/>
    <property type="project" value="UniProtKB-KW"/>
</dbReference>
<dbReference type="GO" id="GO:0003677">
    <property type="term" value="F:DNA binding"/>
    <property type="evidence" value="ECO:0007669"/>
    <property type="project" value="UniProtKB-UniRule"/>
</dbReference>
<dbReference type="GO" id="GO:0003899">
    <property type="term" value="F:DNA-directed RNA polymerase activity"/>
    <property type="evidence" value="ECO:0007669"/>
    <property type="project" value="UniProtKB-UniRule"/>
</dbReference>
<dbReference type="GO" id="GO:0006360">
    <property type="term" value="P:transcription by RNA polymerase I"/>
    <property type="evidence" value="ECO:0000318"/>
    <property type="project" value="GO_Central"/>
</dbReference>
<dbReference type="GO" id="GO:0006366">
    <property type="term" value="P:transcription by RNA polymerase II"/>
    <property type="evidence" value="ECO:0000318"/>
    <property type="project" value="GO_Central"/>
</dbReference>
<dbReference type="GO" id="GO:0042797">
    <property type="term" value="P:tRNA transcription by RNA polymerase III"/>
    <property type="evidence" value="ECO:0000318"/>
    <property type="project" value="GO_Central"/>
</dbReference>
<dbReference type="Gene3D" id="3.90.940.10">
    <property type="match status" value="1"/>
</dbReference>
<dbReference type="HAMAP" id="MF_00192">
    <property type="entry name" value="RNApol_arch_Rpo6"/>
    <property type="match status" value="1"/>
</dbReference>
<dbReference type="InterPro" id="IPR020708">
    <property type="entry name" value="DNA-dir_RNA_polK_14-18kDa_CS"/>
</dbReference>
<dbReference type="InterPro" id="IPR006110">
    <property type="entry name" value="Pol_omega/Rpo6/RPB6"/>
</dbReference>
<dbReference type="InterPro" id="IPR036161">
    <property type="entry name" value="RPB6/omega-like_sf"/>
</dbReference>
<dbReference type="InterPro" id="IPR006111">
    <property type="entry name" value="Rpo6/Rpb6"/>
</dbReference>
<dbReference type="NCBIfam" id="NF002207">
    <property type="entry name" value="PRK01099.1-2"/>
    <property type="match status" value="1"/>
</dbReference>
<dbReference type="NCBIfam" id="NF002208">
    <property type="entry name" value="PRK01099.1-3"/>
    <property type="match status" value="1"/>
</dbReference>
<dbReference type="PANTHER" id="PTHR47227">
    <property type="entry name" value="DNA-DIRECTED RNA POLYMERASE SUBUNIT K"/>
    <property type="match status" value="1"/>
</dbReference>
<dbReference type="PANTHER" id="PTHR47227:SF5">
    <property type="entry name" value="DNA-DIRECTED RNA POLYMERASES I, II, AND III SUBUNIT RPABC2"/>
    <property type="match status" value="1"/>
</dbReference>
<dbReference type="Pfam" id="PF01192">
    <property type="entry name" value="RNA_pol_Rpb6"/>
    <property type="match status" value="1"/>
</dbReference>
<dbReference type="PIRSF" id="PIRSF000778">
    <property type="entry name" value="RpoK/RPB6"/>
    <property type="match status" value="1"/>
</dbReference>
<dbReference type="SMART" id="SM01409">
    <property type="entry name" value="RNA_pol_Rpb6"/>
    <property type="match status" value="1"/>
</dbReference>
<dbReference type="SUPFAM" id="SSF63562">
    <property type="entry name" value="RPB6/omega subunit-like"/>
    <property type="match status" value="1"/>
</dbReference>
<dbReference type="PROSITE" id="PS01111">
    <property type="entry name" value="RNA_POL_K_14KD"/>
    <property type="match status" value="1"/>
</dbReference>
<protein>
    <recommendedName>
        <fullName evidence="1">DNA-directed RNA polymerase subunit Rpo6</fullName>
        <ecNumber evidence="1">2.7.7.6</ecNumber>
    </recommendedName>
    <alternativeName>
        <fullName evidence="1">DNA-directed RNA polymerase subunit K</fullName>
    </alternativeName>
</protein>
<comment type="function">
    <text evidence="1">DNA-dependent RNA polymerase (RNAP) catalyzes the transcription of DNA into RNA using the four ribonucleoside triphosphates as substrates.</text>
</comment>
<comment type="catalytic activity">
    <reaction evidence="1">
        <text>RNA(n) + a ribonucleoside 5'-triphosphate = RNA(n+1) + diphosphate</text>
        <dbReference type="Rhea" id="RHEA:21248"/>
        <dbReference type="Rhea" id="RHEA-COMP:14527"/>
        <dbReference type="Rhea" id="RHEA-COMP:17342"/>
        <dbReference type="ChEBI" id="CHEBI:33019"/>
        <dbReference type="ChEBI" id="CHEBI:61557"/>
        <dbReference type="ChEBI" id="CHEBI:140395"/>
        <dbReference type="EC" id="2.7.7.6"/>
    </reaction>
</comment>
<comment type="subunit">
    <text evidence="1">Part of the RNA polymerase complex.</text>
</comment>
<comment type="subcellular location">
    <subcellularLocation>
        <location evidence="1">Cytoplasm</location>
    </subcellularLocation>
</comment>
<comment type="similarity">
    <text evidence="1">Belongs to the archaeal Rpo6/eukaryotic RPB6 RNA polymerase subunit family.</text>
</comment>
<evidence type="ECO:0000255" key="1">
    <source>
        <dbReference type="HAMAP-Rule" id="MF_00192"/>
    </source>
</evidence>
<accession>Q8ZTF9</accession>
<sequence>MTTSELIERINKLIDVVDKAINKREFYPPRLTKYETARIIGARALQLAMGAQPLVDIQEVGSVDPVLIAMEELRRGLLDFIIVREMPDGKTMRIRLKELLELERTL</sequence>